<organism>
    <name type="scientific">Methylorubrum extorquens (strain ATCC 14718 / DSM 1338 / JCM 2805 / NCIMB 9133 / AM1)</name>
    <name type="common">Methylobacterium extorquens</name>
    <dbReference type="NCBI Taxonomy" id="272630"/>
    <lineage>
        <taxon>Bacteria</taxon>
        <taxon>Pseudomonadati</taxon>
        <taxon>Pseudomonadota</taxon>
        <taxon>Alphaproteobacteria</taxon>
        <taxon>Hyphomicrobiales</taxon>
        <taxon>Methylobacteriaceae</taxon>
        <taxon>Methylorubrum</taxon>
    </lineage>
</organism>
<protein>
    <recommendedName>
        <fullName evidence="1">3-isopropylmalate dehydratase small subunit</fullName>
        <ecNumber evidence="1">4.2.1.33</ecNumber>
    </recommendedName>
    <alternativeName>
        <fullName evidence="1">Alpha-IPM isomerase</fullName>
        <shortName evidence="1">IPMI</shortName>
    </alternativeName>
    <alternativeName>
        <fullName evidence="1">Isopropylmalate isomerase</fullName>
    </alternativeName>
</protein>
<name>LEUD_METEA</name>
<proteinExistence type="inferred from homology"/>
<reference key="1">
    <citation type="journal article" date="2002" name="J. Bacteriol.">
        <title>Glyoxylate regeneration pathway in the methylotroph Methylobacterium extorquens AM1.</title>
        <authorList>
            <person name="Korotkova N."/>
            <person name="Chistoserdova L."/>
            <person name="Kuksa V."/>
            <person name="Lidstrom M.E."/>
        </authorList>
    </citation>
    <scope>NUCLEOTIDE SEQUENCE [GENOMIC DNA]</scope>
</reference>
<reference key="2">
    <citation type="journal article" date="2009" name="PLoS ONE">
        <title>Methylobacterium genome sequences: a reference blueprint to investigate microbial metabolism of C1 compounds from natural and industrial sources.</title>
        <authorList>
            <person name="Vuilleumier S."/>
            <person name="Chistoserdova L."/>
            <person name="Lee M.-C."/>
            <person name="Bringel F."/>
            <person name="Lajus A."/>
            <person name="Zhou Y."/>
            <person name="Gourion B."/>
            <person name="Barbe V."/>
            <person name="Chang J."/>
            <person name="Cruveiller S."/>
            <person name="Dossat C."/>
            <person name="Gillett W."/>
            <person name="Gruffaz C."/>
            <person name="Haugen E."/>
            <person name="Hourcade E."/>
            <person name="Levy R."/>
            <person name="Mangenot S."/>
            <person name="Muller E."/>
            <person name="Nadalig T."/>
            <person name="Pagni M."/>
            <person name="Penny C."/>
            <person name="Peyraud R."/>
            <person name="Robinson D.G."/>
            <person name="Roche D."/>
            <person name="Rouy Z."/>
            <person name="Saenampechek C."/>
            <person name="Salvignol G."/>
            <person name="Vallenet D."/>
            <person name="Wu Z."/>
            <person name="Marx C.J."/>
            <person name="Vorholt J.A."/>
            <person name="Olson M.V."/>
            <person name="Kaul R."/>
            <person name="Weissenbach J."/>
            <person name="Medigue C."/>
            <person name="Lidstrom M.E."/>
        </authorList>
    </citation>
    <scope>NUCLEOTIDE SEQUENCE [LARGE SCALE GENOMIC DNA]</scope>
    <source>
        <strain>ATCC 14718 / DSM 1338 / JCM 2805 / NCIMB 9133 / AM1</strain>
    </source>
</reference>
<accession>Q8RP98</accession>
<accession>C5AP91</accession>
<evidence type="ECO:0000255" key="1">
    <source>
        <dbReference type="HAMAP-Rule" id="MF_01031"/>
    </source>
</evidence>
<gene>
    <name evidence="1" type="primary">leuD</name>
    <name type="ordered locus">MexAM1_META1p0186</name>
</gene>
<sequence length="201" mass="22162">MEKFTTLEGVAAPMRIINIDTDRIIPKQYLKTIKRTGLGQGLFSEMRYNDDGSEYPDFVLNQPAYRHAKTLVVGDNFGCGSSREHAPWALADFGIRCVISTSFADIFFNNCAKNGILAIVVSPEDLEKLFQDAERGANATLTIDLAAQTIKGPDGGTLHFDIDEGRKHNLLNGLDEIGLTLDQKAPAIDAYEAKLAQREWA</sequence>
<dbReference type="EC" id="4.2.1.33" evidence="1"/>
<dbReference type="EMBL" id="AF416776">
    <property type="protein sequence ID" value="AAL86729.1"/>
    <property type="molecule type" value="Genomic_DNA"/>
</dbReference>
<dbReference type="EMBL" id="CP001510">
    <property type="protein sequence ID" value="ACS38148.1"/>
    <property type="molecule type" value="Genomic_DNA"/>
</dbReference>
<dbReference type="RefSeq" id="WP_003597293.1">
    <property type="nucleotide sequence ID" value="NC_012808.1"/>
</dbReference>
<dbReference type="SMR" id="Q8RP98"/>
<dbReference type="STRING" id="272630.MexAM1_META1p0186"/>
<dbReference type="KEGG" id="mea:Mex_1p0186"/>
<dbReference type="eggNOG" id="COG0066">
    <property type="taxonomic scope" value="Bacteria"/>
</dbReference>
<dbReference type="HOGENOM" id="CLU_081378_0_3_5"/>
<dbReference type="OrthoDB" id="9777465at2"/>
<dbReference type="UniPathway" id="UPA00048">
    <property type="reaction ID" value="UER00071"/>
</dbReference>
<dbReference type="Proteomes" id="UP000009081">
    <property type="component" value="Chromosome"/>
</dbReference>
<dbReference type="GO" id="GO:0009316">
    <property type="term" value="C:3-isopropylmalate dehydratase complex"/>
    <property type="evidence" value="ECO:0007669"/>
    <property type="project" value="InterPro"/>
</dbReference>
<dbReference type="GO" id="GO:0003861">
    <property type="term" value="F:3-isopropylmalate dehydratase activity"/>
    <property type="evidence" value="ECO:0007669"/>
    <property type="project" value="UniProtKB-UniRule"/>
</dbReference>
<dbReference type="GO" id="GO:0009098">
    <property type="term" value="P:L-leucine biosynthetic process"/>
    <property type="evidence" value="ECO:0007669"/>
    <property type="project" value="UniProtKB-UniRule"/>
</dbReference>
<dbReference type="CDD" id="cd01577">
    <property type="entry name" value="IPMI_Swivel"/>
    <property type="match status" value="1"/>
</dbReference>
<dbReference type="FunFam" id="3.20.19.10:FF:000003">
    <property type="entry name" value="3-isopropylmalate dehydratase small subunit"/>
    <property type="match status" value="1"/>
</dbReference>
<dbReference type="Gene3D" id="3.20.19.10">
    <property type="entry name" value="Aconitase, domain 4"/>
    <property type="match status" value="1"/>
</dbReference>
<dbReference type="HAMAP" id="MF_01031">
    <property type="entry name" value="LeuD_type1"/>
    <property type="match status" value="1"/>
</dbReference>
<dbReference type="InterPro" id="IPR004431">
    <property type="entry name" value="3-IsopropMal_deHydase_ssu"/>
</dbReference>
<dbReference type="InterPro" id="IPR015928">
    <property type="entry name" value="Aconitase/3IPM_dehydase_swvl"/>
</dbReference>
<dbReference type="InterPro" id="IPR000573">
    <property type="entry name" value="AconitaseA/IPMdHydase_ssu_swvl"/>
</dbReference>
<dbReference type="InterPro" id="IPR033940">
    <property type="entry name" value="IPMI_Swivel"/>
</dbReference>
<dbReference type="InterPro" id="IPR050075">
    <property type="entry name" value="LeuD"/>
</dbReference>
<dbReference type="NCBIfam" id="TIGR00171">
    <property type="entry name" value="leuD"/>
    <property type="match status" value="1"/>
</dbReference>
<dbReference type="NCBIfam" id="NF002458">
    <property type="entry name" value="PRK01641.1"/>
    <property type="match status" value="1"/>
</dbReference>
<dbReference type="PANTHER" id="PTHR43345:SF5">
    <property type="entry name" value="3-ISOPROPYLMALATE DEHYDRATASE SMALL SUBUNIT"/>
    <property type="match status" value="1"/>
</dbReference>
<dbReference type="PANTHER" id="PTHR43345">
    <property type="entry name" value="3-ISOPROPYLMALATE DEHYDRATASE SMALL SUBUNIT 2-RELATED-RELATED"/>
    <property type="match status" value="1"/>
</dbReference>
<dbReference type="Pfam" id="PF00694">
    <property type="entry name" value="Aconitase_C"/>
    <property type="match status" value="1"/>
</dbReference>
<dbReference type="SUPFAM" id="SSF52016">
    <property type="entry name" value="LeuD/IlvD-like"/>
    <property type="match status" value="1"/>
</dbReference>
<keyword id="KW-0028">Amino-acid biosynthesis</keyword>
<keyword id="KW-0100">Branched-chain amino acid biosynthesis</keyword>
<keyword id="KW-0432">Leucine biosynthesis</keyword>
<keyword id="KW-0456">Lyase</keyword>
<keyword id="KW-1185">Reference proteome</keyword>
<feature type="chain" id="PRO_0000141835" description="3-isopropylmalate dehydratase small subunit">
    <location>
        <begin position="1"/>
        <end position="201"/>
    </location>
</feature>
<comment type="function">
    <text evidence="1">Catalyzes the isomerization between 2-isopropylmalate and 3-isopropylmalate, via the formation of 2-isopropylmaleate.</text>
</comment>
<comment type="catalytic activity">
    <reaction evidence="1">
        <text>(2R,3S)-3-isopropylmalate = (2S)-2-isopropylmalate</text>
        <dbReference type="Rhea" id="RHEA:32287"/>
        <dbReference type="ChEBI" id="CHEBI:1178"/>
        <dbReference type="ChEBI" id="CHEBI:35121"/>
        <dbReference type="EC" id="4.2.1.33"/>
    </reaction>
</comment>
<comment type="pathway">
    <text evidence="1">Amino-acid biosynthesis; L-leucine biosynthesis; L-leucine from 3-methyl-2-oxobutanoate: step 2/4.</text>
</comment>
<comment type="subunit">
    <text evidence="1">Heterodimer of LeuC and LeuD.</text>
</comment>
<comment type="similarity">
    <text evidence="1">Belongs to the LeuD family. LeuD type 1 subfamily.</text>
</comment>